<sequence>MINLTRQRYRVSNLVTGGTSLDVILSHSPNKFTFPPLLKSCAKLGDVVQGRILHAQVVKTGFFVDVFTATALVSMYMKVKQVTDALKVLDEMPERGIASVNAAVSGLLENGFCRDAFRMFGDARVSGSGMNSVTVASVLGGCGDIEGGMQLHCLAMKSGFEMEVYVGTSLVSMYSRCGEWVLAARMFEKVPHKSVVTYNAFISGLMENGVMNLVPSVFNLMRKFSSEEPNDVTFVNAITACASLLNLQYGRQLHGLVMKKEFQFETMVGTALIDMYSKCRCWKSAYIVFTELKDTRNLISWNSVISGMMINGQHETAVELFEKLDSEGLKPDSATWNSLISGFSQLGKVIEAFKFFERMLSVVMVPSLKCLTSLLSACSDIWTLKNGKEIHGHVIKAAAERDIFVLTSLIDMYMKCGLSSWARRIFDRFEPKPKDPVFWNVMISGYGKHGECESAIEIFELLREEKVEPSLATFTAVLSACSHCGNVEKGSQIFRLMQEEYGYKPSTEHIGCMIDLLGRSGRLREAKEVIDQMSEPSSSVYSSLLGSCRQHLDPVLGEEAAMKLAELEPENPAPFVILSSIYAALERWEDVESIRQVIDQKQLVKLPGLSLSG</sequence>
<organism>
    <name type="scientific">Arabidopsis thaliana</name>
    <name type="common">Mouse-ear cress</name>
    <dbReference type="NCBI Taxonomy" id="3702"/>
    <lineage>
        <taxon>Eukaryota</taxon>
        <taxon>Viridiplantae</taxon>
        <taxon>Streptophyta</taxon>
        <taxon>Embryophyta</taxon>
        <taxon>Tracheophyta</taxon>
        <taxon>Spermatophyta</taxon>
        <taxon>Magnoliopsida</taxon>
        <taxon>eudicotyledons</taxon>
        <taxon>Gunneridae</taxon>
        <taxon>Pentapetalae</taxon>
        <taxon>rosids</taxon>
        <taxon>malvids</taxon>
        <taxon>Brassicales</taxon>
        <taxon>Brassicaceae</taxon>
        <taxon>Camelineae</taxon>
        <taxon>Arabidopsis</taxon>
    </lineage>
</organism>
<accession>Q1PFA6</accession>
<accession>A0MEI0</accession>
<accession>O64507</accession>
<proteinExistence type="evidence at transcript level"/>
<keyword id="KW-1185">Reference proteome</keyword>
<keyword id="KW-0677">Repeat</keyword>
<gene>
    <name type="primary">PCMP-E22</name>
    <name type="ordered locus">At2g02750</name>
    <name type="ORF">T20F6.11</name>
</gene>
<name>PP144_ARATH</name>
<protein>
    <recommendedName>
        <fullName>Pentatricopeptide repeat-containing protein At2g02750</fullName>
    </recommendedName>
</protein>
<evidence type="ECO:0000305" key="1"/>
<comment type="similarity">
    <text evidence="1">Belongs to the PPR family. PCMP-E subfamily.</text>
</comment>
<comment type="sequence caution" evidence="1">
    <conflict type="erroneous termination">
        <sequence resource="EMBL-CDS" id="ABK28160"/>
    </conflict>
    <text>Extended C-terminus.</text>
</comment>
<comment type="sequence caution" evidence="1">
    <conflict type="miscellaneous discrepancy">
        <sequence resource="EMBL" id="BX821054"/>
    </conflict>
    <text>Sequencing errors.</text>
</comment>
<comment type="online information" name="Pentatricopeptide repeat proteins">
    <link uri="https://ppr.plantenergy.uwa.edu.au"/>
</comment>
<feature type="chain" id="PRO_0000356004" description="Pentatricopeptide repeat-containing protein At2g02750">
    <location>
        <begin position="1"/>
        <end position="613"/>
    </location>
</feature>
<feature type="repeat" description="PPR 1">
    <location>
        <begin position="30"/>
        <end position="64"/>
    </location>
</feature>
<feature type="repeat" description="PPR 2">
    <location>
        <begin position="65"/>
        <end position="99"/>
    </location>
</feature>
<feature type="repeat" description="PPR 3">
    <location>
        <begin position="101"/>
        <end position="126"/>
    </location>
</feature>
<feature type="repeat" description="PPR 4">
    <location>
        <begin position="128"/>
        <end position="162"/>
    </location>
</feature>
<feature type="repeat" description="PPR 5">
    <location>
        <begin position="163"/>
        <end position="193"/>
    </location>
</feature>
<feature type="repeat" description="PPR 6">
    <location>
        <begin position="194"/>
        <end position="228"/>
    </location>
</feature>
<feature type="repeat" description="PPR 7">
    <location>
        <begin position="230"/>
        <end position="264"/>
    </location>
</feature>
<feature type="repeat" description="PPR 8">
    <location>
        <begin position="265"/>
        <end position="295"/>
    </location>
</feature>
<feature type="repeat" description="PPR 9">
    <location>
        <begin position="297"/>
        <end position="331"/>
    </location>
</feature>
<feature type="repeat" description="PPR 10">
    <location>
        <begin position="332"/>
        <end position="366"/>
    </location>
</feature>
<feature type="repeat" description="PPR 11">
    <location>
        <begin position="367"/>
        <end position="401"/>
    </location>
</feature>
<feature type="repeat" description="PPR 12">
    <location>
        <begin position="402"/>
        <end position="432"/>
    </location>
</feature>
<feature type="repeat" description="PPR 13">
    <location>
        <begin position="435"/>
        <end position="469"/>
    </location>
</feature>
<feature type="repeat" description="PPR 14">
    <location>
        <begin position="470"/>
        <end position="500"/>
    </location>
</feature>
<feature type="repeat" description="PPR 15">
    <location>
        <begin position="506"/>
        <end position="539"/>
    </location>
</feature>
<feature type="region of interest" description="Type E motif; degenerate">
    <location>
        <begin position="540"/>
        <end position="613"/>
    </location>
</feature>
<feature type="sequence conflict" description="In Ref. 3; ABE65422." evidence="1" ref="3">
    <original>K</original>
    <variation>R</variation>
    <location>
        <position position="434"/>
    </location>
</feature>
<reference key="1">
    <citation type="journal article" date="1999" name="Nature">
        <title>Sequence and analysis of chromosome 2 of the plant Arabidopsis thaliana.</title>
        <authorList>
            <person name="Lin X."/>
            <person name="Kaul S."/>
            <person name="Rounsley S.D."/>
            <person name="Shea T.P."/>
            <person name="Benito M.-I."/>
            <person name="Town C.D."/>
            <person name="Fujii C.Y."/>
            <person name="Mason T.M."/>
            <person name="Bowman C.L."/>
            <person name="Barnstead M.E."/>
            <person name="Feldblyum T.V."/>
            <person name="Buell C.R."/>
            <person name="Ketchum K.A."/>
            <person name="Lee J.J."/>
            <person name="Ronning C.M."/>
            <person name="Koo H.L."/>
            <person name="Moffat K.S."/>
            <person name="Cronin L.A."/>
            <person name="Shen M."/>
            <person name="Pai G."/>
            <person name="Van Aken S."/>
            <person name="Umayam L."/>
            <person name="Tallon L.J."/>
            <person name="Gill J.E."/>
            <person name="Adams M.D."/>
            <person name="Carrera A.J."/>
            <person name="Creasy T.H."/>
            <person name="Goodman H.M."/>
            <person name="Somerville C.R."/>
            <person name="Copenhaver G.P."/>
            <person name="Preuss D."/>
            <person name="Nierman W.C."/>
            <person name="White O."/>
            <person name="Eisen J.A."/>
            <person name="Salzberg S.L."/>
            <person name="Fraser C.M."/>
            <person name="Venter J.C."/>
        </authorList>
    </citation>
    <scope>NUCLEOTIDE SEQUENCE [LARGE SCALE GENOMIC DNA]</scope>
    <source>
        <strain>cv. Columbia</strain>
    </source>
</reference>
<reference key="2">
    <citation type="journal article" date="2017" name="Plant J.">
        <title>Araport11: a complete reannotation of the Arabidopsis thaliana reference genome.</title>
        <authorList>
            <person name="Cheng C.Y."/>
            <person name="Krishnakumar V."/>
            <person name="Chan A.P."/>
            <person name="Thibaud-Nissen F."/>
            <person name="Schobel S."/>
            <person name="Town C.D."/>
        </authorList>
    </citation>
    <scope>GENOME REANNOTATION</scope>
    <source>
        <strain>cv. Columbia</strain>
    </source>
</reference>
<reference key="3">
    <citation type="journal article" date="2006" name="Plant Biotechnol. J.">
        <title>Simultaneous high-throughput recombinational cloning of open reading frames in closed and open configurations.</title>
        <authorList>
            <person name="Underwood B.A."/>
            <person name="Vanderhaeghen R."/>
            <person name="Whitford R."/>
            <person name="Town C.D."/>
            <person name="Hilson P."/>
        </authorList>
    </citation>
    <scope>NUCLEOTIDE SEQUENCE [LARGE SCALE GENOMIC DNA]</scope>
    <source>
        <strain>cv. Columbia</strain>
    </source>
</reference>
<reference key="4">
    <citation type="journal article" date="2004" name="Genome Res.">
        <title>Whole genome sequence comparisons and 'full-length' cDNA sequences: a combined approach to evaluate and improve Arabidopsis genome annotation.</title>
        <authorList>
            <person name="Castelli V."/>
            <person name="Aury J.-M."/>
            <person name="Jaillon O."/>
            <person name="Wincker P."/>
            <person name="Clepet C."/>
            <person name="Menard M."/>
            <person name="Cruaud C."/>
            <person name="Quetier F."/>
            <person name="Scarpelli C."/>
            <person name="Schaechter V."/>
            <person name="Temple G."/>
            <person name="Caboche M."/>
            <person name="Weissenbach J."/>
            <person name="Salanoubat M."/>
        </authorList>
    </citation>
    <scope>NUCLEOTIDE SEQUENCE [LARGE SCALE MRNA]</scope>
    <source>
        <strain>cv. Columbia</strain>
    </source>
</reference>
<reference key="5">
    <citation type="journal article" date="2000" name="Plant Mol. Biol.">
        <title>In Arabidopsis thaliana, 1% of the genome codes for a novel protein family unique to plants.</title>
        <authorList>
            <person name="Aubourg S."/>
            <person name="Boudet N."/>
            <person name="Kreis M."/>
            <person name="Lecharny A."/>
        </authorList>
    </citation>
    <scope>GENE FAMILY</scope>
</reference>
<reference key="6">
    <citation type="journal article" date="2004" name="Plant Cell">
        <title>Genome-wide analysis of Arabidopsis pentatricopeptide repeat proteins reveals their essential role in organelle biogenesis.</title>
        <authorList>
            <person name="Lurin C."/>
            <person name="Andres C."/>
            <person name="Aubourg S."/>
            <person name="Bellaoui M."/>
            <person name="Bitton F."/>
            <person name="Bruyere C."/>
            <person name="Caboche M."/>
            <person name="Debast C."/>
            <person name="Gualberto J."/>
            <person name="Hoffmann B."/>
            <person name="Lecharny A."/>
            <person name="Le Ret M."/>
            <person name="Martin-Magniette M.-L."/>
            <person name="Mireau H."/>
            <person name="Peeters N."/>
            <person name="Renou J.-P."/>
            <person name="Szurek B."/>
            <person name="Taconnat L."/>
            <person name="Small I."/>
        </authorList>
    </citation>
    <scope>GENE FAMILY</scope>
</reference>
<dbReference type="EMBL" id="AC002521">
    <property type="protein sequence ID" value="AAC05347.1"/>
    <property type="molecule type" value="Genomic_DNA"/>
</dbReference>
<dbReference type="EMBL" id="CP002685">
    <property type="protein sequence ID" value="AEC05620.1"/>
    <property type="molecule type" value="Genomic_DNA"/>
</dbReference>
<dbReference type="EMBL" id="DQ446457">
    <property type="protein sequence ID" value="ABE65422.1"/>
    <property type="molecule type" value="Genomic_DNA"/>
</dbReference>
<dbReference type="EMBL" id="DQ652951">
    <property type="protein sequence ID" value="ABK28160.1"/>
    <property type="status" value="ALT_SEQ"/>
    <property type="molecule type" value="Genomic_DNA"/>
</dbReference>
<dbReference type="EMBL" id="BX821054">
    <property type="status" value="NOT_ANNOTATED_CDS"/>
    <property type="molecule type" value="mRNA"/>
</dbReference>
<dbReference type="PIR" id="T00853">
    <property type="entry name" value="T00853"/>
</dbReference>
<dbReference type="RefSeq" id="NP_178378.1">
    <property type="nucleotide sequence ID" value="NM_126330.3"/>
</dbReference>
<dbReference type="SMR" id="Q1PFA6"/>
<dbReference type="FunCoup" id="Q1PFA6">
    <property type="interactions" value="82"/>
</dbReference>
<dbReference type="PaxDb" id="3702-AT2G02750.1"/>
<dbReference type="ProteomicsDB" id="250492"/>
<dbReference type="EnsemblPlants" id="AT2G02750.1">
    <property type="protein sequence ID" value="AT2G02750.1"/>
    <property type="gene ID" value="AT2G02750"/>
</dbReference>
<dbReference type="GeneID" id="814804"/>
<dbReference type="Gramene" id="AT2G02750.1">
    <property type="protein sequence ID" value="AT2G02750.1"/>
    <property type="gene ID" value="AT2G02750"/>
</dbReference>
<dbReference type="KEGG" id="ath:AT2G02750"/>
<dbReference type="Araport" id="AT2G02750"/>
<dbReference type="TAIR" id="AT2G02750"/>
<dbReference type="eggNOG" id="KOG4197">
    <property type="taxonomic scope" value="Eukaryota"/>
</dbReference>
<dbReference type="HOGENOM" id="CLU_002706_0_1_1"/>
<dbReference type="InParanoid" id="Q1PFA6"/>
<dbReference type="OMA" id="YSKCGCW"/>
<dbReference type="PhylomeDB" id="Q1PFA6"/>
<dbReference type="PRO" id="PR:Q1PFA6"/>
<dbReference type="Proteomes" id="UP000006548">
    <property type="component" value="Chromosome 2"/>
</dbReference>
<dbReference type="ExpressionAtlas" id="Q1PFA6">
    <property type="expression patterns" value="baseline and differential"/>
</dbReference>
<dbReference type="GO" id="GO:0003723">
    <property type="term" value="F:RNA binding"/>
    <property type="evidence" value="ECO:0007669"/>
    <property type="project" value="InterPro"/>
</dbReference>
<dbReference type="GO" id="GO:0009451">
    <property type="term" value="P:RNA modification"/>
    <property type="evidence" value="ECO:0007669"/>
    <property type="project" value="InterPro"/>
</dbReference>
<dbReference type="FunFam" id="1.25.40.10:FF:000284">
    <property type="entry name" value="Pentatricopeptide repeat-containing protein"/>
    <property type="match status" value="1"/>
</dbReference>
<dbReference type="FunFam" id="1.25.40.10:FF:000344">
    <property type="entry name" value="Pentatricopeptide repeat-containing protein"/>
    <property type="match status" value="1"/>
</dbReference>
<dbReference type="FunFam" id="1.25.40.10:FF:000888">
    <property type="entry name" value="Pentatricopeptide repeat-containing protein"/>
    <property type="match status" value="1"/>
</dbReference>
<dbReference type="FunFam" id="1.25.40.10:FF:001175">
    <property type="entry name" value="Pentatricopeptide repeat-containing protein At1g19720"/>
    <property type="match status" value="1"/>
</dbReference>
<dbReference type="FunFam" id="1.25.40.10:FF:000196">
    <property type="entry name" value="Pentatricopeptide repeat-containing protein At4g14850"/>
    <property type="match status" value="1"/>
</dbReference>
<dbReference type="Gene3D" id="1.25.40.10">
    <property type="entry name" value="Tetratricopeptide repeat domain"/>
    <property type="match status" value="5"/>
</dbReference>
<dbReference type="InterPro" id="IPR046848">
    <property type="entry name" value="E_motif"/>
</dbReference>
<dbReference type="InterPro" id="IPR002885">
    <property type="entry name" value="Pentatricopeptide_rpt"/>
</dbReference>
<dbReference type="InterPro" id="IPR046960">
    <property type="entry name" value="PPR_At4g14850-like_plant"/>
</dbReference>
<dbReference type="InterPro" id="IPR011990">
    <property type="entry name" value="TPR-like_helical_dom_sf"/>
</dbReference>
<dbReference type="NCBIfam" id="TIGR00756">
    <property type="entry name" value="PPR"/>
    <property type="match status" value="7"/>
</dbReference>
<dbReference type="PANTHER" id="PTHR47926:SF424">
    <property type="entry name" value="PENTACOTRIPEPTIDE-REPEAT REGION OF PRORP DOMAIN-CONTAINING PROTEIN"/>
    <property type="match status" value="1"/>
</dbReference>
<dbReference type="PANTHER" id="PTHR47926">
    <property type="entry name" value="PENTATRICOPEPTIDE REPEAT-CONTAINING PROTEIN"/>
    <property type="match status" value="1"/>
</dbReference>
<dbReference type="Pfam" id="PF20431">
    <property type="entry name" value="E_motif"/>
    <property type="match status" value="1"/>
</dbReference>
<dbReference type="Pfam" id="PF01535">
    <property type="entry name" value="PPR"/>
    <property type="match status" value="3"/>
</dbReference>
<dbReference type="Pfam" id="PF13041">
    <property type="entry name" value="PPR_2"/>
    <property type="match status" value="3"/>
</dbReference>
<dbReference type="Pfam" id="PF13812">
    <property type="entry name" value="PPR_3"/>
    <property type="match status" value="1"/>
</dbReference>
<dbReference type="PROSITE" id="PS51375">
    <property type="entry name" value="PPR"/>
    <property type="match status" value="11"/>
</dbReference>